<organism>
    <name type="scientific">Thermoanaerobacter sp. (strain X514)</name>
    <dbReference type="NCBI Taxonomy" id="399726"/>
    <lineage>
        <taxon>Bacteria</taxon>
        <taxon>Bacillati</taxon>
        <taxon>Bacillota</taxon>
        <taxon>Clostridia</taxon>
        <taxon>Thermoanaerobacterales</taxon>
        <taxon>Thermoanaerobacteraceae</taxon>
        <taxon>Thermoanaerobacter</taxon>
    </lineage>
</organism>
<dbReference type="EC" id="2.5.1.145" evidence="1"/>
<dbReference type="EMBL" id="CP000923">
    <property type="protein sequence ID" value="ABY93341.1"/>
    <property type="molecule type" value="Genomic_DNA"/>
</dbReference>
<dbReference type="RefSeq" id="WP_003867223.1">
    <property type="nucleotide sequence ID" value="NC_010320.1"/>
</dbReference>
<dbReference type="SMR" id="B0K3X0"/>
<dbReference type="KEGG" id="tex:Teth514_2069"/>
<dbReference type="HOGENOM" id="CLU_013386_1_1_9"/>
<dbReference type="UniPathway" id="UPA00664"/>
<dbReference type="Proteomes" id="UP000002155">
    <property type="component" value="Chromosome"/>
</dbReference>
<dbReference type="GO" id="GO:0005886">
    <property type="term" value="C:plasma membrane"/>
    <property type="evidence" value="ECO:0007669"/>
    <property type="project" value="UniProtKB-SubCell"/>
</dbReference>
<dbReference type="GO" id="GO:0008961">
    <property type="term" value="F:phosphatidylglycerol-prolipoprotein diacylglyceryl transferase activity"/>
    <property type="evidence" value="ECO:0007669"/>
    <property type="project" value="UniProtKB-UniRule"/>
</dbReference>
<dbReference type="GO" id="GO:0042158">
    <property type="term" value="P:lipoprotein biosynthetic process"/>
    <property type="evidence" value="ECO:0007669"/>
    <property type="project" value="UniProtKB-UniRule"/>
</dbReference>
<dbReference type="HAMAP" id="MF_01147">
    <property type="entry name" value="Lgt"/>
    <property type="match status" value="1"/>
</dbReference>
<dbReference type="InterPro" id="IPR001640">
    <property type="entry name" value="Lgt"/>
</dbReference>
<dbReference type="NCBIfam" id="NF000779">
    <property type="entry name" value="PRK00052.3-5"/>
    <property type="match status" value="1"/>
</dbReference>
<dbReference type="PANTHER" id="PTHR30589:SF0">
    <property type="entry name" value="PHOSPHATIDYLGLYCEROL--PROLIPOPROTEIN DIACYLGLYCERYL TRANSFERASE"/>
    <property type="match status" value="1"/>
</dbReference>
<dbReference type="PANTHER" id="PTHR30589">
    <property type="entry name" value="PROLIPOPROTEIN DIACYLGLYCERYL TRANSFERASE"/>
    <property type="match status" value="1"/>
</dbReference>
<dbReference type="Pfam" id="PF01790">
    <property type="entry name" value="LGT"/>
    <property type="match status" value="1"/>
</dbReference>
<protein>
    <recommendedName>
        <fullName evidence="1">Phosphatidylglycerol--prolipoprotein diacylglyceryl transferase</fullName>
        <ecNumber evidence="1">2.5.1.145</ecNumber>
    </recommendedName>
</protein>
<reference key="1">
    <citation type="submission" date="2008-01" db="EMBL/GenBank/DDBJ databases">
        <title>Complete sequence of Thermoanaerobacter sp. X514.</title>
        <authorList>
            <consortium name="US DOE Joint Genome Institute"/>
            <person name="Copeland A."/>
            <person name="Lucas S."/>
            <person name="Lapidus A."/>
            <person name="Barry K."/>
            <person name="Glavina del Rio T."/>
            <person name="Dalin E."/>
            <person name="Tice H."/>
            <person name="Pitluck S."/>
            <person name="Bruce D."/>
            <person name="Goodwin L."/>
            <person name="Saunders E."/>
            <person name="Brettin T."/>
            <person name="Detter J.C."/>
            <person name="Han C."/>
            <person name="Schmutz J."/>
            <person name="Larimer F."/>
            <person name="Land M."/>
            <person name="Hauser L."/>
            <person name="Kyrpides N."/>
            <person name="Kim E."/>
            <person name="Hemme C."/>
            <person name="Fields M.W."/>
            <person name="He Z."/>
            <person name="Zhou J."/>
            <person name="Richardson P."/>
        </authorList>
    </citation>
    <scope>NUCLEOTIDE SEQUENCE [LARGE SCALE GENOMIC DNA]</scope>
    <source>
        <strain>X514</strain>
    </source>
</reference>
<feature type="chain" id="PRO_1000137468" description="Phosphatidylglycerol--prolipoprotein diacylglyceryl transferase">
    <location>
        <begin position="1"/>
        <end position="257"/>
    </location>
</feature>
<feature type="transmembrane region" description="Helical" evidence="1">
    <location>
        <begin position="13"/>
        <end position="33"/>
    </location>
</feature>
<feature type="transmembrane region" description="Helical" evidence="1">
    <location>
        <begin position="49"/>
        <end position="69"/>
    </location>
</feature>
<feature type="transmembrane region" description="Helical" evidence="1">
    <location>
        <begin position="88"/>
        <end position="108"/>
    </location>
</feature>
<feature type="transmembrane region" description="Helical" evidence="1">
    <location>
        <begin position="123"/>
        <end position="143"/>
    </location>
</feature>
<feature type="transmembrane region" description="Helical" evidence="1">
    <location>
        <begin position="152"/>
        <end position="172"/>
    </location>
</feature>
<feature type="transmembrane region" description="Helical" evidence="1">
    <location>
        <begin position="185"/>
        <end position="202"/>
    </location>
</feature>
<feature type="transmembrane region" description="Helical" evidence="1">
    <location>
        <begin position="223"/>
        <end position="243"/>
    </location>
</feature>
<feature type="binding site" evidence="1">
    <location>
        <position position="136"/>
    </location>
    <ligand>
        <name>a 1,2-diacyl-sn-glycero-3-phospho-(1'-sn-glycerol)</name>
        <dbReference type="ChEBI" id="CHEBI:64716"/>
    </ligand>
</feature>
<keyword id="KW-1003">Cell membrane</keyword>
<keyword id="KW-0472">Membrane</keyword>
<keyword id="KW-0808">Transferase</keyword>
<keyword id="KW-0812">Transmembrane</keyword>
<keyword id="KW-1133">Transmembrane helix</keyword>
<accession>B0K3X0</accession>
<comment type="function">
    <text evidence="1">Catalyzes the transfer of the diacylglyceryl group from phosphatidylglycerol to the sulfhydryl group of the N-terminal cysteine of a prolipoprotein, the first step in the formation of mature lipoproteins.</text>
</comment>
<comment type="catalytic activity">
    <reaction evidence="1">
        <text>L-cysteinyl-[prolipoprotein] + a 1,2-diacyl-sn-glycero-3-phospho-(1'-sn-glycerol) = an S-1,2-diacyl-sn-glyceryl-L-cysteinyl-[prolipoprotein] + sn-glycerol 1-phosphate + H(+)</text>
        <dbReference type="Rhea" id="RHEA:56712"/>
        <dbReference type="Rhea" id="RHEA-COMP:14679"/>
        <dbReference type="Rhea" id="RHEA-COMP:14680"/>
        <dbReference type="ChEBI" id="CHEBI:15378"/>
        <dbReference type="ChEBI" id="CHEBI:29950"/>
        <dbReference type="ChEBI" id="CHEBI:57685"/>
        <dbReference type="ChEBI" id="CHEBI:64716"/>
        <dbReference type="ChEBI" id="CHEBI:140658"/>
        <dbReference type="EC" id="2.5.1.145"/>
    </reaction>
</comment>
<comment type="pathway">
    <text evidence="1">Protein modification; lipoprotein biosynthesis (diacylglyceryl transfer).</text>
</comment>
<comment type="subcellular location">
    <subcellularLocation>
        <location evidence="1">Cell membrane</location>
        <topology evidence="1">Multi-pass membrane protein</topology>
    </subcellularLocation>
</comment>
<comment type="similarity">
    <text evidence="1">Belongs to the Lgt family.</text>
</comment>
<gene>
    <name evidence="1" type="primary">lgt</name>
    <name type="ordered locus">Teth514_2069</name>
</gene>
<proteinExistence type="inferred from homology"/>
<evidence type="ECO:0000255" key="1">
    <source>
        <dbReference type="HAMAP-Rule" id="MF_01147"/>
    </source>
</evidence>
<name>LGT_THEPX</name>
<sequence>MYIPTISPYAFKIGPIDVHWYGIFMAISIAIGGYYLYRQAMKLNYDEDFLLNLLMIVVISGVVGARLMFVLANYPEWFIKDPVQVLKIYEGGLSWHGAVLGGFLAGLYYCRKKGVRINPLEDFAVLGLSIGNILVRIGNIFNQEVLGRPTEFAFGRWPAQLVGVAMGIILLIRYFYIQKKHMPDGYQFWSFIFYYQLMRGLIEETVRDNPLIWPVYLNEKWGIGFFTLTQLVTPFILILAYWMIRRVLNDPNKQFYN</sequence>